<evidence type="ECO:0000255" key="1">
    <source>
        <dbReference type="HAMAP-Rule" id="MF_00110"/>
    </source>
</evidence>
<dbReference type="EC" id="4.2.3.4" evidence="1"/>
<dbReference type="EMBL" id="CP000806">
    <property type="protein sequence ID" value="ACB53788.1"/>
    <property type="molecule type" value="Genomic_DNA"/>
</dbReference>
<dbReference type="RefSeq" id="WP_009543504.1">
    <property type="nucleotide sequence ID" value="NC_010546.1"/>
</dbReference>
<dbReference type="SMR" id="B1WUD4"/>
<dbReference type="STRING" id="43989.cce_4440"/>
<dbReference type="KEGG" id="cyt:cce_4440"/>
<dbReference type="eggNOG" id="COG0337">
    <property type="taxonomic scope" value="Bacteria"/>
</dbReference>
<dbReference type="HOGENOM" id="CLU_001201_0_2_3"/>
<dbReference type="OrthoDB" id="9806583at2"/>
<dbReference type="UniPathway" id="UPA00053">
    <property type="reaction ID" value="UER00085"/>
</dbReference>
<dbReference type="Proteomes" id="UP000001203">
    <property type="component" value="Chromosome circular"/>
</dbReference>
<dbReference type="GO" id="GO:0005737">
    <property type="term" value="C:cytoplasm"/>
    <property type="evidence" value="ECO:0007669"/>
    <property type="project" value="UniProtKB-SubCell"/>
</dbReference>
<dbReference type="GO" id="GO:0003856">
    <property type="term" value="F:3-dehydroquinate synthase activity"/>
    <property type="evidence" value="ECO:0007669"/>
    <property type="project" value="UniProtKB-UniRule"/>
</dbReference>
<dbReference type="GO" id="GO:0046872">
    <property type="term" value="F:metal ion binding"/>
    <property type="evidence" value="ECO:0007669"/>
    <property type="project" value="UniProtKB-KW"/>
</dbReference>
<dbReference type="GO" id="GO:0000166">
    <property type="term" value="F:nucleotide binding"/>
    <property type="evidence" value="ECO:0007669"/>
    <property type="project" value="UniProtKB-KW"/>
</dbReference>
<dbReference type="GO" id="GO:0008652">
    <property type="term" value="P:amino acid biosynthetic process"/>
    <property type="evidence" value="ECO:0007669"/>
    <property type="project" value="UniProtKB-KW"/>
</dbReference>
<dbReference type="GO" id="GO:0009073">
    <property type="term" value="P:aromatic amino acid family biosynthetic process"/>
    <property type="evidence" value="ECO:0007669"/>
    <property type="project" value="UniProtKB-KW"/>
</dbReference>
<dbReference type="GO" id="GO:0009423">
    <property type="term" value="P:chorismate biosynthetic process"/>
    <property type="evidence" value="ECO:0007669"/>
    <property type="project" value="UniProtKB-UniRule"/>
</dbReference>
<dbReference type="CDD" id="cd08195">
    <property type="entry name" value="DHQS"/>
    <property type="match status" value="1"/>
</dbReference>
<dbReference type="FunFam" id="3.40.50.1970:FF:000001">
    <property type="entry name" value="3-dehydroquinate synthase"/>
    <property type="match status" value="1"/>
</dbReference>
<dbReference type="Gene3D" id="3.40.50.1970">
    <property type="match status" value="1"/>
</dbReference>
<dbReference type="Gene3D" id="1.20.1090.10">
    <property type="entry name" value="Dehydroquinate synthase-like - alpha domain"/>
    <property type="match status" value="1"/>
</dbReference>
<dbReference type="HAMAP" id="MF_00110">
    <property type="entry name" value="DHQ_synthase"/>
    <property type="match status" value="1"/>
</dbReference>
<dbReference type="InterPro" id="IPR050071">
    <property type="entry name" value="Dehydroquinate_synthase"/>
</dbReference>
<dbReference type="InterPro" id="IPR016037">
    <property type="entry name" value="DHQ_synth_AroB"/>
</dbReference>
<dbReference type="InterPro" id="IPR030963">
    <property type="entry name" value="DHQ_synth_fam"/>
</dbReference>
<dbReference type="InterPro" id="IPR030960">
    <property type="entry name" value="DHQS/DOIS_N"/>
</dbReference>
<dbReference type="InterPro" id="IPR056179">
    <property type="entry name" value="DHQS_C"/>
</dbReference>
<dbReference type="NCBIfam" id="TIGR01357">
    <property type="entry name" value="aroB"/>
    <property type="match status" value="1"/>
</dbReference>
<dbReference type="PANTHER" id="PTHR43622">
    <property type="entry name" value="3-DEHYDROQUINATE SYNTHASE"/>
    <property type="match status" value="1"/>
</dbReference>
<dbReference type="PANTHER" id="PTHR43622:SF7">
    <property type="entry name" value="3-DEHYDROQUINATE SYNTHASE, CHLOROPLASTIC"/>
    <property type="match status" value="1"/>
</dbReference>
<dbReference type="Pfam" id="PF01761">
    <property type="entry name" value="DHQ_synthase"/>
    <property type="match status" value="1"/>
</dbReference>
<dbReference type="Pfam" id="PF24621">
    <property type="entry name" value="DHQS_C"/>
    <property type="match status" value="1"/>
</dbReference>
<dbReference type="PIRSF" id="PIRSF001455">
    <property type="entry name" value="DHQ_synth"/>
    <property type="match status" value="1"/>
</dbReference>
<dbReference type="SUPFAM" id="SSF56796">
    <property type="entry name" value="Dehydroquinate synthase-like"/>
    <property type="match status" value="1"/>
</dbReference>
<keyword id="KW-0028">Amino-acid biosynthesis</keyword>
<keyword id="KW-0057">Aromatic amino acid biosynthesis</keyword>
<keyword id="KW-0170">Cobalt</keyword>
<keyword id="KW-0963">Cytoplasm</keyword>
<keyword id="KW-0456">Lyase</keyword>
<keyword id="KW-0479">Metal-binding</keyword>
<keyword id="KW-0520">NAD</keyword>
<keyword id="KW-0547">Nucleotide-binding</keyword>
<keyword id="KW-1185">Reference proteome</keyword>
<keyword id="KW-0862">Zinc</keyword>
<reference key="1">
    <citation type="journal article" date="2008" name="Proc. Natl. Acad. Sci. U.S.A.">
        <title>The genome of Cyanothece 51142, a unicellular diazotrophic cyanobacterium important in the marine nitrogen cycle.</title>
        <authorList>
            <person name="Welsh E.A."/>
            <person name="Liberton M."/>
            <person name="Stoeckel J."/>
            <person name="Loh T."/>
            <person name="Elvitigala T."/>
            <person name="Wang C."/>
            <person name="Wollam A."/>
            <person name="Fulton R.S."/>
            <person name="Clifton S.W."/>
            <person name="Jacobs J.M."/>
            <person name="Aurora R."/>
            <person name="Ghosh B.K."/>
            <person name="Sherman L.A."/>
            <person name="Smith R.D."/>
            <person name="Wilson R.K."/>
            <person name="Pakrasi H.B."/>
        </authorList>
    </citation>
    <scope>NUCLEOTIDE SEQUENCE [LARGE SCALE GENOMIC DNA]</scope>
    <source>
        <strain>ATCC 51142 / BH68</strain>
    </source>
</reference>
<comment type="function">
    <text evidence="1">Catalyzes the conversion of 3-deoxy-D-arabino-heptulosonate 7-phosphate (DAHP) to dehydroquinate (DHQ).</text>
</comment>
<comment type="catalytic activity">
    <reaction evidence="1">
        <text>7-phospho-2-dehydro-3-deoxy-D-arabino-heptonate = 3-dehydroquinate + phosphate</text>
        <dbReference type="Rhea" id="RHEA:21968"/>
        <dbReference type="ChEBI" id="CHEBI:32364"/>
        <dbReference type="ChEBI" id="CHEBI:43474"/>
        <dbReference type="ChEBI" id="CHEBI:58394"/>
        <dbReference type="EC" id="4.2.3.4"/>
    </reaction>
</comment>
<comment type="cofactor">
    <cofactor evidence="1">
        <name>Co(2+)</name>
        <dbReference type="ChEBI" id="CHEBI:48828"/>
    </cofactor>
    <cofactor evidence="1">
        <name>Zn(2+)</name>
        <dbReference type="ChEBI" id="CHEBI:29105"/>
    </cofactor>
    <text evidence="1">Binds 1 divalent metal cation per subunit. Can use either Co(2+) or Zn(2+).</text>
</comment>
<comment type="cofactor">
    <cofactor evidence="1">
        <name>NAD(+)</name>
        <dbReference type="ChEBI" id="CHEBI:57540"/>
    </cofactor>
</comment>
<comment type="pathway">
    <text evidence="1">Metabolic intermediate biosynthesis; chorismate biosynthesis; chorismate from D-erythrose 4-phosphate and phosphoenolpyruvate: step 2/7.</text>
</comment>
<comment type="subcellular location">
    <subcellularLocation>
        <location evidence="1">Cytoplasm</location>
    </subcellularLocation>
</comment>
<comment type="similarity">
    <text evidence="1">Belongs to the sugar phosphate cyclases superfamily. Dehydroquinate synthase family.</text>
</comment>
<accession>B1WUD4</accession>
<organism>
    <name type="scientific">Crocosphaera subtropica (strain ATCC 51142 / BH68)</name>
    <name type="common">Cyanothece sp. (strain ATCC 51142)</name>
    <dbReference type="NCBI Taxonomy" id="43989"/>
    <lineage>
        <taxon>Bacteria</taxon>
        <taxon>Bacillati</taxon>
        <taxon>Cyanobacteriota</taxon>
        <taxon>Cyanophyceae</taxon>
        <taxon>Oscillatoriophycideae</taxon>
        <taxon>Chroococcales</taxon>
        <taxon>Aphanothecaceae</taxon>
        <taxon>Crocosphaera</taxon>
        <taxon>Crocosphaera subtropica</taxon>
    </lineage>
</organism>
<protein>
    <recommendedName>
        <fullName evidence="1">3-dehydroquinate synthase</fullName>
        <shortName evidence="1">DHQS</shortName>
        <ecNumber evidence="1">4.2.3.4</ecNumber>
    </recommendedName>
</protein>
<name>AROB_CROS5</name>
<sequence>MSSVIQVNLPQTSYNIIISPNSLGSVGRHLTSLNLEQKILVISNPEIFDYYGEIVINSLKQAGFKVFSHVIPAGETYKTLDSISKIYDTALKHRLERASTLLALGGGVIGDMTGFAAATWLRGINFIQVPTSLLAMVDASIGGKTGVNHPQGKNLIGAFYQPRLVLIDPIVLKTLPVREFRAGMAEVIKYGVIWNQGLFNQLERQKKLDSLDSINLETIQTIITQSCQAKVDVVSQDEKEAGLRAILNYGHTIGHALESLTGYREINHGEAVALGMVAAGKIAVKLGMWKEEMSQRQKNIIQKAALPVIVDYPLKSQAILESLQLDKKVKAGKVRFILPTDIGQVEIREGVPSEVITRVLEEIKM</sequence>
<feature type="chain" id="PRO_1000094501" description="3-dehydroquinate synthase">
    <location>
        <begin position="1"/>
        <end position="365"/>
    </location>
</feature>
<feature type="binding site" evidence="1">
    <location>
        <begin position="107"/>
        <end position="111"/>
    </location>
    <ligand>
        <name>NAD(+)</name>
        <dbReference type="ChEBI" id="CHEBI:57540"/>
    </ligand>
</feature>
<feature type="binding site" evidence="1">
    <location>
        <begin position="131"/>
        <end position="132"/>
    </location>
    <ligand>
        <name>NAD(+)</name>
        <dbReference type="ChEBI" id="CHEBI:57540"/>
    </ligand>
</feature>
<feature type="binding site" evidence="1">
    <location>
        <position position="144"/>
    </location>
    <ligand>
        <name>NAD(+)</name>
        <dbReference type="ChEBI" id="CHEBI:57540"/>
    </ligand>
</feature>
<feature type="binding site" evidence="1">
    <location>
        <position position="153"/>
    </location>
    <ligand>
        <name>NAD(+)</name>
        <dbReference type="ChEBI" id="CHEBI:57540"/>
    </ligand>
</feature>
<feature type="binding site" evidence="1">
    <location>
        <position position="186"/>
    </location>
    <ligand>
        <name>Zn(2+)</name>
        <dbReference type="ChEBI" id="CHEBI:29105"/>
    </ligand>
</feature>
<feature type="binding site" evidence="1">
    <location>
        <position position="251"/>
    </location>
    <ligand>
        <name>Zn(2+)</name>
        <dbReference type="ChEBI" id="CHEBI:29105"/>
    </ligand>
</feature>
<feature type="binding site" evidence="1">
    <location>
        <position position="268"/>
    </location>
    <ligand>
        <name>Zn(2+)</name>
        <dbReference type="ChEBI" id="CHEBI:29105"/>
    </ligand>
</feature>
<proteinExistence type="inferred from homology"/>
<gene>
    <name evidence="1" type="primary">aroB</name>
    <name type="ordered locus">cce_4440</name>
</gene>